<keyword id="KW-0002">3D-structure</keyword>
<keyword id="KW-0042">Antenna complex</keyword>
<keyword id="KW-0089">Bile pigment</keyword>
<keyword id="KW-0157">Chromophore</keyword>
<keyword id="KW-0249">Electron transport</keyword>
<keyword id="KW-0456">Lyase</keyword>
<keyword id="KW-0472">Membrane</keyword>
<keyword id="KW-0602">Photosynthesis</keyword>
<keyword id="KW-0605">Phycobilisome</keyword>
<keyword id="KW-1185">Reference proteome</keyword>
<keyword id="KW-0677">Repeat</keyword>
<keyword id="KW-0793">Thylakoid</keyword>
<keyword id="KW-0813">Transport</keyword>
<gene>
    <name type="primary">apcE</name>
    <name type="ordered locus">slr0335</name>
</gene>
<feature type="chain" id="PRO_0000403185" description="Phycobiliprotein ApcE">
    <location>
        <begin position="1"/>
        <end position="896"/>
    </location>
</feature>
<feature type="domain" description="PBS-linker 1" evidence="2">
    <location>
        <begin position="247"/>
        <end position="427"/>
    </location>
</feature>
<feature type="domain" description="PBS-linker 2" evidence="2">
    <location>
        <begin position="508"/>
        <end position="684"/>
    </location>
</feature>
<feature type="domain" description="PBS-linker 3" evidence="2">
    <location>
        <begin position="703"/>
        <end position="881"/>
    </location>
</feature>
<feature type="binding site" description="covalent" evidence="1">
    <location>
        <position position="190"/>
    </location>
    <ligand>
        <name>(2R,3E)-phycocyanobilin</name>
        <dbReference type="ChEBI" id="CHEBI:85275"/>
    </ligand>
</feature>
<feature type="helix" evidence="4">
    <location>
        <begin position="20"/>
        <end position="29"/>
    </location>
</feature>
<feature type="turn" evidence="4">
    <location>
        <begin position="30"/>
        <end position="32"/>
    </location>
</feature>
<feature type="helix" evidence="4">
    <location>
        <begin position="37"/>
        <end position="62"/>
    </location>
</feature>
<feature type="helix" evidence="4">
    <location>
        <begin position="64"/>
        <end position="75"/>
    </location>
</feature>
<feature type="strand" evidence="4">
    <location>
        <begin position="76"/>
        <end position="79"/>
    </location>
</feature>
<feature type="helix" evidence="4">
    <location>
        <begin position="81"/>
        <end position="83"/>
    </location>
</feature>
<feature type="helix" evidence="4">
    <location>
        <begin position="141"/>
        <end position="144"/>
    </location>
</feature>
<feature type="helix" evidence="4">
    <location>
        <begin position="146"/>
        <end position="169"/>
    </location>
</feature>
<feature type="helix" evidence="4">
    <location>
        <begin position="173"/>
        <end position="179"/>
    </location>
</feature>
<feature type="helix" evidence="4">
    <location>
        <begin position="182"/>
        <end position="186"/>
    </location>
</feature>
<feature type="helix" evidence="4">
    <location>
        <begin position="187"/>
        <end position="189"/>
    </location>
</feature>
<feature type="helix" evidence="4">
    <location>
        <begin position="192"/>
        <end position="208"/>
    </location>
</feature>
<feature type="helix" evidence="4">
    <location>
        <begin position="216"/>
        <end position="231"/>
    </location>
</feature>
<feature type="strand" evidence="4">
    <location>
        <begin position="239"/>
        <end position="241"/>
    </location>
</feature>
<feature type="strand" evidence="4">
    <location>
        <begin position="251"/>
        <end position="253"/>
    </location>
</feature>
<feature type="helix" evidence="4">
    <location>
        <begin position="255"/>
        <end position="260"/>
    </location>
</feature>
<feature type="helix" evidence="4">
    <location>
        <begin position="275"/>
        <end position="290"/>
    </location>
</feature>
<feature type="helix" evidence="4">
    <location>
        <begin position="294"/>
        <end position="298"/>
    </location>
</feature>
<feature type="helix" evidence="4">
    <location>
        <begin position="303"/>
        <end position="310"/>
    </location>
</feature>
<feature type="helix" evidence="4">
    <location>
        <begin position="316"/>
        <end position="325"/>
    </location>
</feature>
<feature type="helix" evidence="4">
    <location>
        <begin position="327"/>
        <end position="333"/>
    </location>
</feature>
<feature type="turn" evidence="4">
    <location>
        <begin position="334"/>
        <end position="336"/>
    </location>
</feature>
<feature type="helix" evidence="4">
    <location>
        <begin position="339"/>
        <end position="351"/>
    </location>
</feature>
<feature type="helix" evidence="4">
    <location>
        <begin position="358"/>
        <end position="382"/>
    </location>
</feature>
<feature type="helix" evidence="4">
    <location>
        <begin position="384"/>
        <end position="389"/>
    </location>
</feature>
<feature type="turn" evidence="4">
    <location>
        <begin position="390"/>
        <end position="393"/>
    </location>
</feature>
<feature type="turn" evidence="4">
    <location>
        <begin position="401"/>
        <end position="403"/>
    </location>
</feature>
<feature type="helix" evidence="4">
    <location>
        <begin position="411"/>
        <end position="418"/>
    </location>
</feature>
<feature type="helix" evidence="4">
    <location>
        <begin position="422"/>
        <end position="424"/>
    </location>
</feature>
<feature type="helix" evidence="4">
    <location>
        <begin position="430"/>
        <end position="437"/>
    </location>
</feature>
<feature type="helix" evidence="4">
    <location>
        <begin position="449"/>
        <end position="451"/>
    </location>
</feature>
<feature type="strand" evidence="4">
    <location>
        <begin position="465"/>
        <end position="468"/>
    </location>
</feature>
<feature type="strand" evidence="4">
    <location>
        <begin position="485"/>
        <end position="488"/>
    </location>
</feature>
<feature type="helix" evidence="4">
    <location>
        <begin position="490"/>
        <end position="492"/>
    </location>
</feature>
<feature type="turn" evidence="4">
    <location>
        <begin position="494"/>
        <end position="496"/>
    </location>
</feature>
<feature type="helix" evidence="4">
    <location>
        <begin position="498"/>
        <end position="500"/>
    </location>
</feature>
<feature type="helix" evidence="4">
    <location>
        <begin position="506"/>
        <end position="508"/>
    </location>
</feature>
<feature type="helix" evidence="4">
    <location>
        <begin position="535"/>
        <end position="551"/>
    </location>
</feature>
<feature type="helix" evidence="4">
    <location>
        <begin position="562"/>
        <end position="569"/>
    </location>
</feature>
<feature type="helix" evidence="4">
    <location>
        <begin position="575"/>
        <end position="584"/>
    </location>
</feature>
<feature type="helix" evidence="4">
    <location>
        <begin position="586"/>
        <end position="592"/>
    </location>
</feature>
<feature type="turn" evidence="4">
    <location>
        <begin position="593"/>
        <end position="595"/>
    </location>
</feature>
<feature type="helix" evidence="4">
    <location>
        <begin position="598"/>
        <end position="610"/>
    </location>
</feature>
<feature type="helix" evidence="4">
    <location>
        <begin position="617"/>
        <end position="629"/>
    </location>
</feature>
<feature type="helix" evidence="4">
    <location>
        <begin position="632"/>
        <end position="640"/>
    </location>
</feature>
<feature type="helix" evidence="4">
    <location>
        <begin position="643"/>
        <end position="648"/>
    </location>
</feature>
<feature type="strand" evidence="4">
    <location>
        <begin position="651"/>
        <end position="653"/>
    </location>
</feature>
<feature type="helix" evidence="4">
    <location>
        <begin position="662"/>
        <end position="669"/>
    </location>
</feature>
<feature type="turn" evidence="4">
    <location>
        <begin position="672"/>
        <end position="674"/>
    </location>
</feature>
<feature type="turn" evidence="4">
    <location>
        <begin position="677"/>
        <end position="680"/>
    </location>
</feature>
<feature type="helix" evidence="3">
    <location>
        <begin position="732"/>
        <end position="747"/>
    </location>
</feature>
<feature type="helix" evidence="3">
    <location>
        <begin position="753"/>
        <end position="759"/>
    </location>
</feature>
<feature type="helix" evidence="3">
    <location>
        <begin position="761"/>
        <end position="768"/>
    </location>
</feature>
<feature type="helix" evidence="3">
    <location>
        <begin position="774"/>
        <end position="782"/>
    </location>
</feature>
<feature type="helix" evidence="3">
    <location>
        <begin position="785"/>
        <end position="791"/>
    </location>
</feature>
<feature type="strand" evidence="3">
    <location>
        <begin position="793"/>
        <end position="795"/>
    </location>
</feature>
<feature type="helix" evidence="3">
    <location>
        <begin position="797"/>
        <end position="808"/>
    </location>
</feature>
<feature type="strand" evidence="3">
    <location>
        <begin position="809"/>
        <end position="811"/>
    </location>
</feature>
<feature type="helix" evidence="3">
    <location>
        <begin position="816"/>
        <end position="829"/>
    </location>
</feature>
<feature type="helix" evidence="3">
    <location>
        <begin position="831"/>
        <end position="839"/>
    </location>
</feature>
<feature type="helix" evidence="3">
    <location>
        <begin position="842"/>
        <end position="847"/>
    </location>
</feature>
<feature type="strand" evidence="3">
    <location>
        <begin position="850"/>
        <end position="852"/>
    </location>
</feature>
<comment type="function">
    <text evidence="1">This protein is postulated to act both as terminal energy acceptor (by its phycobilin-like domains) and as a linker polypeptide (by its repeats and arms) that stabilizes the phycobilisome core architecture. Has intrinsic bilin lyase activity (By similarity).</text>
</comment>
<comment type="subunit">
    <text evidence="1">Heterodimer of ApcF (a variant beta-allophycocyanin). Phycobilisomes of this organism are composed of a two cylinder core, from which six rods radiate. The core is mainly composed of allophycocyanin alpha and beta chains and of minor components (By similarity).</text>
</comment>
<comment type="interaction">
    <interactant intactId="EBI-862826">
        <id>Q55544</id>
    </interactant>
    <interactant intactId="EBI-862916">
        <id>P52231</id>
        <label>trxA</label>
    </interactant>
    <organismsDiffer>false</organismsDiffer>
    <experiments>4</experiments>
</comment>
<comment type="subcellular location">
    <subcellularLocation>
        <location evidence="1">Cellular thylakoid membrane</location>
        <topology evidence="1">Peripheral membrane protein</topology>
        <orientation evidence="1">Cytoplasmic side</orientation>
    </subcellularLocation>
    <text evidence="1">Anchors the phycobilisome perpendicularly to the cytoplasmic surface of the thylakoid membrane.</text>
</comment>
<comment type="PTM">
    <text evidence="1">Contains one covalently linked bilin chromophore. This protein autochromophorylates (By similarity).</text>
</comment>
<comment type="similarity">
    <text evidence="2">Belongs to the phycobilisome linker protein family.</text>
</comment>
<name>APCE_SYNY3</name>
<accession>Q55544</accession>
<organism>
    <name type="scientific">Synechocystis sp. (strain ATCC 27184 / PCC 6803 / Kazusa)</name>
    <dbReference type="NCBI Taxonomy" id="1111708"/>
    <lineage>
        <taxon>Bacteria</taxon>
        <taxon>Bacillati</taxon>
        <taxon>Cyanobacteriota</taxon>
        <taxon>Cyanophyceae</taxon>
        <taxon>Synechococcales</taxon>
        <taxon>Merismopediaceae</taxon>
        <taxon>Synechocystis</taxon>
    </lineage>
</organism>
<proteinExistence type="evidence at protein level"/>
<dbReference type="EC" id="4.-.-.-"/>
<dbReference type="EMBL" id="BA000022">
    <property type="protein sequence ID" value="BAA10042.1"/>
    <property type="molecule type" value="Genomic_DNA"/>
</dbReference>
<dbReference type="PIR" id="S76064">
    <property type="entry name" value="S76064"/>
</dbReference>
<dbReference type="PDB" id="2L06">
    <property type="method" value="NMR"/>
    <property type="chains" value="A=254-401"/>
</dbReference>
<dbReference type="PDB" id="3OHW">
    <property type="method" value="X-ray"/>
    <property type="resolution" value="2.70 A"/>
    <property type="chains" value="A/B=711-858"/>
</dbReference>
<dbReference type="PDB" id="3OSJ">
    <property type="method" value="X-ray"/>
    <property type="resolution" value="2.30 A"/>
    <property type="chains" value="A/B/C/D=254-400"/>
</dbReference>
<dbReference type="PDB" id="7SC7">
    <property type="method" value="EM"/>
    <property type="resolution" value="2.80 A"/>
    <property type="chains" value="BD/CL=1-896"/>
</dbReference>
<dbReference type="PDB" id="7SC9">
    <property type="method" value="EM"/>
    <property type="resolution" value="2.60 A"/>
    <property type="chains" value="BD/CM=1-896"/>
</dbReference>
<dbReference type="PDB" id="7SCB">
    <property type="method" value="EM"/>
    <property type="resolution" value="2.50 A"/>
    <property type="chains" value="BE=1-896"/>
</dbReference>
<dbReference type="PDB" id="7SCC">
    <property type="method" value="EM"/>
    <property type="resolution" value="2.60 A"/>
    <property type="chains" value="AQ/BM=1-896"/>
</dbReference>
<dbReference type="PDB" id="7TZ8">
    <property type="method" value="NMR"/>
    <property type="chains" value="A=254-401"/>
</dbReference>
<dbReference type="PDB" id="8TO2">
    <property type="method" value="EM"/>
    <property type="resolution" value="2.00 A"/>
    <property type="chains" value="A=1-896"/>
</dbReference>
<dbReference type="PDB" id="8TPJ">
    <property type="method" value="EM"/>
    <property type="resolution" value="2.10 A"/>
    <property type="chains" value="A=1-896"/>
</dbReference>
<dbReference type="PDBsum" id="2L06"/>
<dbReference type="PDBsum" id="3OHW"/>
<dbReference type="PDBsum" id="3OSJ"/>
<dbReference type="PDBsum" id="7SC7"/>
<dbReference type="PDBsum" id="7SC9"/>
<dbReference type="PDBsum" id="7SCB"/>
<dbReference type="PDBsum" id="7SCC"/>
<dbReference type="PDBsum" id="7TZ8"/>
<dbReference type="PDBsum" id="8TO2"/>
<dbReference type="PDBsum" id="8TPJ"/>
<dbReference type="EMDB" id="EMD-25028"/>
<dbReference type="EMDB" id="EMD-25030"/>
<dbReference type="EMDB" id="EMD-25032"/>
<dbReference type="EMDB" id="EMD-25033"/>
<dbReference type="EMDB" id="EMD-41434"/>
<dbReference type="EMDB" id="EMD-41475"/>
<dbReference type="SMR" id="Q55544"/>
<dbReference type="IntAct" id="Q55544">
    <property type="interactions" value="7"/>
</dbReference>
<dbReference type="STRING" id="1148.gene:10499534"/>
<dbReference type="PaxDb" id="1148-1001419"/>
<dbReference type="EnsemblBacteria" id="BAA10042">
    <property type="protein sequence ID" value="BAA10042"/>
    <property type="gene ID" value="BAA10042"/>
</dbReference>
<dbReference type="KEGG" id="syn:slr0335"/>
<dbReference type="eggNOG" id="COG0237">
    <property type="taxonomic scope" value="Bacteria"/>
</dbReference>
<dbReference type="eggNOG" id="COG0448">
    <property type="taxonomic scope" value="Bacteria"/>
</dbReference>
<dbReference type="InParanoid" id="Q55544"/>
<dbReference type="PhylomeDB" id="Q55544"/>
<dbReference type="EvolutionaryTrace" id="Q55544"/>
<dbReference type="Proteomes" id="UP000001425">
    <property type="component" value="Chromosome"/>
</dbReference>
<dbReference type="GO" id="GO:0030089">
    <property type="term" value="C:phycobilisome"/>
    <property type="evidence" value="ECO:0000318"/>
    <property type="project" value="GO_Central"/>
</dbReference>
<dbReference type="GO" id="GO:0031676">
    <property type="term" value="C:plasma membrane-derived thylakoid membrane"/>
    <property type="evidence" value="ECO:0007669"/>
    <property type="project" value="UniProtKB-SubCell"/>
</dbReference>
<dbReference type="GO" id="GO:0016829">
    <property type="term" value="F:lyase activity"/>
    <property type="evidence" value="ECO:0007669"/>
    <property type="project" value="UniProtKB-KW"/>
</dbReference>
<dbReference type="GO" id="GO:0015979">
    <property type="term" value="P:photosynthesis"/>
    <property type="evidence" value="ECO:0007669"/>
    <property type="project" value="UniProtKB-KW"/>
</dbReference>
<dbReference type="CDD" id="cd12128">
    <property type="entry name" value="PBP_PBS-LCM"/>
    <property type="match status" value="1"/>
</dbReference>
<dbReference type="Gene3D" id="1.10.3130.20">
    <property type="entry name" value="Phycobilisome linker domain"/>
    <property type="match status" value="3"/>
</dbReference>
<dbReference type="Gene3D" id="1.10.490.20">
    <property type="entry name" value="Phycocyanins"/>
    <property type="match status" value="1"/>
</dbReference>
<dbReference type="InterPro" id="IPR009050">
    <property type="entry name" value="Globin-like_sf"/>
</dbReference>
<dbReference type="InterPro" id="IPR001297">
    <property type="entry name" value="PBS_linker_dom"/>
</dbReference>
<dbReference type="InterPro" id="IPR038255">
    <property type="entry name" value="PBS_linker_sf"/>
</dbReference>
<dbReference type="InterPro" id="IPR012128">
    <property type="entry name" value="Phycobilisome_asu/bsu"/>
</dbReference>
<dbReference type="InterPro" id="IPR038719">
    <property type="entry name" value="Phycobilisome_asu/bsu_sf"/>
</dbReference>
<dbReference type="PANTHER" id="PTHR34011:SF6">
    <property type="entry name" value="PHYCOBILIPROTEIN APCE"/>
    <property type="match status" value="1"/>
</dbReference>
<dbReference type="PANTHER" id="PTHR34011">
    <property type="entry name" value="PHYCOBILISOME 32.1 KDA LINKER POLYPEPTIDE, PHYCOCYANIN-ASSOCIATED, ROD 2-RELATED"/>
    <property type="match status" value="1"/>
</dbReference>
<dbReference type="Pfam" id="PF00427">
    <property type="entry name" value="PBS_linker_poly"/>
    <property type="match status" value="3"/>
</dbReference>
<dbReference type="Pfam" id="PF00502">
    <property type="entry name" value="Phycobilisome"/>
    <property type="match status" value="2"/>
</dbReference>
<dbReference type="SUPFAM" id="SSF46458">
    <property type="entry name" value="Globin-like"/>
    <property type="match status" value="1"/>
</dbReference>
<dbReference type="PROSITE" id="PS51445">
    <property type="entry name" value="PBS_LINKER"/>
    <property type="match status" value="3"/>
</dbReference>
<protein>
    <recommendedName>
        <fullName>Phycobiliprotein ApcE</fullName>
        <ecNumber>4.-.-.-</ecNumber>
    </recommendedName>
    <alternativeName>
        <fullName>Phycobilisome LCM core-membrane linker polypeptide</fullName>
    </alternativeName>
    <alternativeName>
        <fullName>Phycobilisome core-membrane linker phycobiliprotein ApcE</fullName>
    </alternativeName>
</protein>
<reference key="1">
    <citation type="journal article" date="1996" name="DNA Res.">
        <title>Sequence analysis of the genome of the unicellular cyanobacterium Synechocystis sp. strain PCC6803. II. Sequence determination of the entire genome and assignment of potential protein-coding regions.</title>
        <authorList>
            <person name="Kaneko T."/>
            <person name="Sato S."/>
            <person name="Kotani H."/>
            <person name="Tanaka A."/>
            <person name="Asamizu E."/>
            <person name="Nakamura Y."/>
            <person name="Miyajima N."/>
            <person name="Hirosawa M."/>
            <person name="Sugiura M."/>
            <person name="Sasamoto S."/>
            <person name="Kimura T."/>
            <person name="Hosouchi T."/>
            <person name="Matsuno A."/>
            <person name="Muraki A."/>
            <person name="Nakazaki N."/>
            <person name="Naruo K."/>
            <person name="Okumura S."/>
            <person name="Shimpo S."/>
            <person name="Takeuchi C."/>
            <person name="Wada T."/>
            <person name="Watanabe A."/>
            <person name="Yamada M."/>
            <person name="Yasuda M."/>
            <person name="Tabata S."/>
        </authorList>
    </citation>
    <scope>NUCLEOTIDE SEQUENCE [LARGE SCALE GENOMIC DNA]</scope>
    <source>
        <strain>ATCC 27184 / PCC 6803 / Kazusa</strain>
    </source>
</reference>
<sequence length="896" mass="100296">MSVKASGGSSLARPQLYQTVPVSAISQAEQQDRFLEGSELNELTAYFQSGALRLEIAETLTQNADLIVSRAANRIFTGGSPLSYLEKPVERQPALVGASSDSRNGSVTYAESNGSGGLFGGLRSVFSSTGPIPPGFRPINIARYGPSNMQKSLRDMSWFLRYTTYAIVAGDPNIIVVNTRGLKEVIENACSIDATIVAIQEMRAASADYFRNNAQAKEIVLQYFDILLSEFKAPTPANKVRQGPSNDIQGLELPQSYFNAAAKRQKYAMKPGLSALEKNAVIKAAYRQIFERDITKAYSQSISYLESQVRNGDISMKEFVRRLAKSPLYRKQFFEPFINSRALELAFRHILGRGPSSREEVQKYFSIVSSGGLPALVDALVDSQEYADYFGEETVPYLRGLGVEAQECRNWGMQQDLFSYSAPFRKVPQFITTFAQYDRPLPDQHVYGSGNDPLEIQFGAIFPKETRNPSKRPAPFNKDTKRILIHRGPAVNNQVGNPSAVGEFPGSLGAKVFRLNGGLPGAKVGKNTGTSVKFGESSTQALIRAAYRQVFGRDLYEGQRLSVAEIQLENGDISVREFIKRLAKSELFLKLYWAPHYVCKAIEYMHRRLLGRPTYGRQEMNQYFDIASKQGFYAVVEAMIDSKEYSDAFGEDTVPYERYLTPGGLQMRSARVGSLREDIGQRVDKEVTPRFVELGQVSAIRTEPEIAYRSNQGVTRQRQQTKVFKLVSTYDKVAVKNAIRAAYRQVFERDLEPYIINSEFTALESKLSNNEINVKEFIEGLGTSELYMKEFYAPYPNTKVIEMGTKHFLGRAPLNQKEIQQYNQILASQGLKAFIGAMVNGMEYLQTFGEDTVPYRRFPTLPAANFPNTERLYNKLTKQDKELVVPSFTPVVKVGG</sequence>
<evidence type="ECO:0000250" key="1"/>
<evidence type="ECO:0000255" key="2">
    <source>
        <dbReference type="PROSITE-ProRule" id="PRU00775"/>
    </source>
</evidence>
<evidence type="ECO:0007829" key="3">
    <source>
        <dbReference type="PDB" id="3OHW"/>
    </source>
</evidence>
<evidence type="ECO:0007829" key="4">
    <source>
        <dbReference type="PDB" id="8TO2"/>
    </source>
</evidence>